<proteinExistence type="evidence at protein level"/>
<evidence type="ECO:0000250" key="1">
    <source>
        <dbReference type="UniProtKB" id="O14607"/>
    </source>
</evidence>
<evidence type="ECO:0000250" key="2">
    <source>
        <dbReference type="UniProtKB" id="O15054"/>
    </source>
</evidence>
<evidence type="ECO:0000255" key="3">
    <source>
        <dbReference type="PROSITE-ProRule" id="PRU00538"/>
    </source>
</evidence>
<evidence type="ECO:0000256" key="4">
    <source>
        <dbReference type="SAM" id="MobiDB-lite"/>
    </source>
</evidence>
<evidence type="ECO:0000269" key="5">
    <source>
    </source>
</evidence>
<evidence type="ECO:0000269" key="6">
    <source>
    </source>
</evidence>
<evidence type="ECO:0000269" key="7">
    <source>
    </source>
</evidence>
<evidence type="ECO:0000269" key="8">
    <source>
    </source>
</evidence>
<evidence type="ECO:0000269" key="9">
    <source>
    </source>
</evidence>
<evidence type="ECO:0000269" key="10">
    <source>
    </source>
</evidence>
<evidence type="ECO:0000305" key="11"/>
<evidence type="ECO:0000312" key="12">
    <source>
        <dbReference type="Proteomes" id="UP000001940"/>
    </source>
</evidence>
<evidence type="ECO:0000312" key="13">
    <source>
        <dbReference type="WormBase" id="F18E9.5b"/>
    </source>
</evidence>
<accession>Q95QK3</accession>
<protein>
    <recommendedName>
        <fullName evidence="11">Lysine-specific demethylase jmjd-3.1</fullName>
        <ecNumber evidence="5">1.14.11.-</ecNumber>
    </recommendedName>
    <alternativeName>
        <fullName evidence="11">JmjC domain-containing protein 3.1</fullName>
    </alternativeName>
</protein>
<dbReference type="EC" id="1.14.11.-" evidence="5"/>
<dbReference type="EMBL" id="BX284606">
    <property type="protein sequence ID" value="CCD68428.1"/>
    <property type="molecule type" value="Genomic_DNA"/>
</dbReference>
<dbReference type="RefSeq" id="NP_509451.2">
    <property type="nucleotide sequence ID" value="NM_077050.5"/>
</dbReference>
<dbReference type="SMR" id="Q95QK3"/>
<dbReference type="DIP" id="DIP-61429N"/>
<dbReference type="FunCoup" id="Q95QK3">
    <property type="interactions" value="15"/>
</dbReference>
<dbReference type="IntAct" id="Q95QK3">
    <property type="interactions" value="2"/>
</dbReference>
<dbReference type="STRING" id="6239.F18E9.5b.1"/>
<dbReference type="PaxDb" id="6239-F18E9.5b"/>
<dbReference type="EnsemblMetazoa" id="F18E9.5b.1">
    <property type="protein sequence ID" value="F18E9.5b.1"/>
    <property type="gene ID" value="WBGene00017571"/>
</dbReference>
<dbReference type="GeneID" id="181111"/>
<dbReference type="KEGG" id="cel:CELE_F18E9.5"/>
<dbReference type="UCSC" id="F18E9.5a.2">
    <property type="organism name" value="c. elegans"/>
</dbReference>
<dbReference type="AGR" id="WB:WBGene00017571"/>
<dbReference type="CTD" id="181111"/>
<dbReference type="WormBase" id="F18E9.5b">
    <property type="protein sequence ID" value="CE30958"/>
    <property type="gene ID" value="WBGene00017571"/>
    <property type="gene designation" value="jmjd-3.1"/>
</dbReference>
<dbReference type="eggNOG" id="KOG1246">
    <property type="taxonomic scope" value="Eukaryota"/>
</dbReference>
<dbReference type="GeneTree" id="ENSGT00970000196490"/>
<dbReference type="HOGENOM" id="CLU_296162_0_0_1"/>
<dbReference type="InParanoid" id="Q95QK3"/>
<dbReference type="OrthoDB" id="5876455at2759"/>
<dbReference type="PhylomeDB" id="Q95QK3"/>
<dbReference type="BRENDA" id="1.14.11.68">
    <property type="organism ID" value="1045"/>
</dbReference>
<dbReference type="Reactome" id="R-CEL-2559580">
    <property type="pathway name" value="Oxidative Stress Induced Senescence"/>
</dbReference>
<dbReference type="Reactome" id="R-CEL-3214842">
    <property type="pathway name" value="HDMs demethylate histones"/>
</dbReference>
<dbReference type="PRO" id="PR:Q95QK3"/>
<dbReference type="Proteomes" id="UP000001940">
    <property type="component" value="Chromosome X"/>
</dbReference>
<dbReference type="Bgee" id="WBGene00017571">
    <property type="expression patterns" value="Expressed in pharyngeal muscle cell (C elegans) and 3 other cell types or tissues"/>
</dbReference>
<dbReference type="ExpressionAtlas" id="Q95QK3">
    <property type="expression patterns" value="baseline and differential"/>
</dbReference>
<dbReference type="GO" id="GO:0044666">
    <property type="term" value="C:MLL3/4 complex"/>
    <property type="evidence" value="ECO:0000318"/>
    <property type="project" value="GO_Central"/>
</dbReference>
<dbReference type="GO" id="GO:0005634">
    <property type="term" value="C:nucleus"/>
    <property type="evidence" value="ECO:0000314"/>
    <property type="project" value="WormBase"/>
</dbReference>
<dbReference type="GO" id="GO:0031490">
    <property type="term" value="F:chromatin DNA binding"/>
    <property type="evidence" value="ECO:0000318"/>
    <property type="project" value="GO_Central"/>
</dbReference>
<dbReference type="GO" id="GO:0071558">
    <property type="term" value="F:histone H3K27me2/H3K27me3 demethylase activity"/>
    <property type="evidence" value="ECO:0000314"/>
    <property type="project" value="WormBase"/>
</dbReference>
<dbReference type="GO" id="GO:0046872">
    <property type="term" value="F:metal ion binding"/>
    <property type="evidence" value="ECO:0007669"/>
    <property type="project" value="UniProtKB-KW"/>
</dbReference>
<dbReference type="GO" id="GO:0000978">
    <property type="term" value="F:RNA polymerase II cis-regulatory region sequence-specific DNA binding"/>
    <property type="evidence" value="ECO:0000318"/>
    <property type="project" value="GO_Central"/>
</dbReference>
<dbReference type="GO" id="GO:0010468">
    <property type="term" value="P:regulation of gene expression"/>
    <property type="evidence" value="ECO:0000318"/>
    <property type="project" value="GO_Central"/>
</dbReference>
<dbReference type="GO" id="GO:0060290">
    <property type="term" value="P:transdifferentiation"/>
    <property type="evidence" value="ECO:0000315"/>
    <property type="project" value="WormBase"/>
</dbReference>
<dbReference type="FunFam" id="1.20.58.1370:FF:000003">
    <property type="entry name" value="Lysine-specific demethylase jmjd-3.1"/>
    <property type="match status" value="1"/>
</dbReference>
<dbReference type="FunFam" id="2.60.120.650:FF:000064">
    <property type="entry name" value="Lysine-specific demethylase jmjd-3.1"/>
    <property type="match status" value="1"/>
</dbReference>
<dbReference type="Gene3D" id="1.20.58.1370">
    <property type="match status" value="1"/>
</dbReference>
<dbReference type="Gene3D" id="2.10.110.20">
    <property type="match status" value="1"/>
</dbReference>
<dbReference type="Gene3D" id="2.60.120.650">
    <property type="entry name" value="Cupin"/>
    <property type="match status" value="1"/>
</dbReference>
<dbReference type="InterPro" id="IPR051630">
    <property type="entry name" value="Corepressor-Demethylase"/>
</dbReference>
<dbReference type="InterPro" id="IPR003347">
    <property type="entry name" value="JmjC_dom"/>
</dbReference>
<dbReference type="InterPro" id="IPR046941">
    <property type="entry name" value="KDM6_GATAL_sf"/>
</dbReference>
<dbReference type="InterPro" id="IPR048562">
    <property type="entry name" value="KDM6A_B-like_C-hel"/>
</dbReference>
<dbReference type="PANTHER" id="PTHR14017">
    <property type="entry name" value="LYSINE-SPECIFIC DEMETHYLASE"/>
    <property type="match status" value="1"/>
</dbReference>
<dbReference type="PANTHER" id="PTHR14017:SF29">
    <property type="entry name" value="LYSINE-SPECIFIC DEMETHYLASE JMJD-3.1"/>
    <property type="match status" value="1"/>
</dbReference>
<dbReference type="Pfam" id="PF02373">
    <property type="entry name" value="JmjC"/>
    <property type="match status" value="1"/>
</dbReference>
<dbReference type="Pfam" id="PF21322">
    <property type="entry name" value="KDM6_C-hel"/>
    <property type="match status" value="1"/>
</dbReference>
<dbReference type="SMART" id="SM00558">
    <property type="entry name" value="JmjC"/>
    <property type="match status" value="1"/>
</dbReference>
<dbReference type="SUPFAM" id="SSF51197">
    <property type="entry name" value="Clavaminate synthase-like"/>
    <property type="match status" value="1"/>
</dbReference>
<dbReference type="PROSITE" id="PS51184">
    <property type="entry name" value="JMJC"/>
    <property type="match status" value="1"/>
</dbReference>
<comment type="function">
    <text evidence="5 6 8 9 10">Histone demethylase that specifically demethylates trimethylated 'Lys-27' of histone H3, a mark associated with transcriptional repression, thereby playing a central role in the histone code (PubMed:17713478, PubMed:25124442). Involved in the transcriptional regulation of the heat shock response, unfolded protein response and possibly other stress response target genes (PubMed:26212459, PubMed:27133168). Required for gonad development and organization (PubMed:17713478). Required for the robust transdifferentiation of the Y rectal epithelial cell to the PDA motor neuron during larval development (PubMed:25124442). Acts cell-autonomously in Y-to-PDA transdifferentiation, which depends on the demethylase activity and on recognition of the H3 tail (PubMed:25124442). Cooperates with set-2 and unc-3 to ensure robust Y-to-PDA transdifferentiation (PubMed:25124442). Promotes mitochondrial stress-induced longevity (PubMed:27133168). Involved in lifespan regulation (PubMed:21803287, PubMed:26212459).</text>
</comment>
<comment type="cofactor">
    <cofactor evidence="2">
        <name>Fe(2+)</name>
        <dbReference type="ChEBI" id="CHEBI:29033"/>
    </cofactor>
</comment>
<comment type="subunit">
    <text evidence="8">Interacts with wdr-5.1 and unc-3.</text>
</comment>
<comment type="subcellular location">
    <subcellularLocation>
        <location evidence="8">Nucleus</location>
    </subcellularLocation>
</comment>
<comment type="tissue specificity">
    <text evidence="7">Mainly expressed in head and tail.</text>
</comment>
<comment type="developmental stage">
    <text evidence="8 9">Expressed in the Y cell before transdifferentiation in the embryo and during redifferentiation into the PDA neuron in larval stages L2 and L3 but not in larval stage L1 (PubMed:25124442). Expression declines in the adult soma (PubMed:26212459).</text>
</comment>
<comment type="disruption phenotype">
    <text evidence="5 6 8 10">RNAi-mediated knockdown results in abnormal gonad migration with aberrant turns and positioning of the distal end as well as in disorganized accumulation of oocytes in the proximal gonad arm (PubMed:17713478). RNAi-mediated knockdown also results in disruption of invariant Y-to-PDA transdifferentiation (PubMed:25124442). RNAi-mediated knockdown suppresses mitochondrial stress response mediated longevity (PubMed:27133168). RNAi-mediated knockdown reduces lifespan of floxuridine-treated animals (PubMed:21803287).</text>
</comment>
<comment type="similarity">
    <text evidence="11">Belongs to the UTX family.</text>
</comment>
<gene>
    <name evidence="13" type="primary">jmjd-3.1</name>
    <name evidence="13" type="ORF">F18E9.5</name>
</gene>
<organism evidence="12">
    <name type="scientific">Caenorhabditis elegans</name>
    <dbReference type="NCBI Taxonomy" id="6239"/>
    <lineage>
        <taxon>Eukaryota</taxon>
        <taxon>Metazoa</taxon>
        <taxon>Ecdysozoa</taxon>
        <taxon>Nematoda</taxon>
        <taxon>Chromadorea</taxon>
        <taxon>Rhabditida</taxon>
        <taxon>Rhabditina</taxon>
        <taxon>Rhabditomorpha</taxon>
        <taxon>Rhabditoidea</taxon>
        <taxon>Rhabditidae</taxon>
        <taxon>Peloderinae</taxon>
        <taxon>Caenorhabditis</taxon>
    </lineage>
</organism>
<feature type="chain" id="PRO_0000438800" description="Lysine-specific demethylase jmjd-3.1">
    <location>
        <begin position="1"/>
        <end position="1061"/>
    </location>
</feature>
<feature type="domain" description="JmjC" evidence="3">
    <location>
        <begin position="760"/>
        <end position="923"/>
    </location>
</feature>
<feature type="region of interest" description="Disordered" evidence="4">
    <location>
        <begin position="30"/>
        <end position="49"/>
    </location>
</feature>
<feature type="region of interest" description="Disordered" evidence="4">
    <location>
        <begin position="256"/>
        <end position="417"/>
    </location>
</feature>
<feature type="region of interest" description="Required for nuclear localization" evidence="8">
    <location>
        <begin position="369"/>
        <end position="417"/>
    </location>
</feature>
<feature type="region of interest" description="Required for binding of unc-3 and for function in Y-to-PDA transdifferentiation" evidence="8">
    <location>
        <begin position="418"/>
        <end position="759"/>
    </location>
</feature>
<feature type="compositionally biased region" description="Polar residues" evidence="4">
    <location>
        <begin position="271"/>
        <end position="287"/>
    </location>
</feature>
<feature type="compositionally biased region" description="Low complexity" evidence="4">
    <location>
        <begin position="310"/>
        <end position="320"/>
    </location>
</feature>
<feature type="compositionally biased region" description="Polar residues" evidence="4">
    <location>
        <begin position="321"/>
        <end position="330"/>
    </location>
</feature>
<feature type="binding site" evidence="3">
    <location>
        <position position="811"/>
    </location>
    <ligand>
        <name>Fe cation</name>
        <dbReference type="ChEBI" id="CHEBI:24875"/>
        <note>catalytic</note>
    </ligand>
</feature>
<feature type="binding site" evidence="3">
    <location>
        <position position="813"/>
    </location>
    <ligand>
        <name>Fe cation</name>
        <dbReference type="ChEBI" id="CHEBI:24875"/>
        <note>catalytic</note>
    </ligand>
</feature>
<feature type="binding site" evidence="3">
    <location>
        <position position="891"/>
    </location>
    <ligand>
        <name>Fe cation</name>
        <dbReference type="ChEBI" id="CHEBI:24875"/>
        <note>catalytic</note>
    </ligand>
</feature>
<feature type="binding site" evidence="1">
    <location>
        <position position="998"/>
    </location>
    <ligand>
        <name>Zn(2+)</name>
        <dbReference type="ChEBI" id="CHEBI:29105"/>
    </ligand>
</feature>
<feature type="binding site" evidence="1">
    <location>
        <position position="1001"/>
    </location>
    <ligand>
        <name>Zn(2+)</name>
        <dbReference type="ChEBI" id="CHEBI:29105"/>
    </ligand>
</feature>
<feature type="binding site" evidence="1">
    <location>
        <position position="1025"/>
    </location>
    <ligand>
        <name>Zn(2+)</name>
        <dbReference type="ChEBI" id="CHEBI:29105"/>
    </ligand>
</feature>
<feature type="binding site" evidence="1">
    <location>
        <position position="1028"/>
    </location>
    <ligand>
        <name>Zn(2+)</name>
        <dbReference type="ChEBI" id="CHEBI:29105"/>
    </ligand>
</feature>
<feature type="mutagenesis site" description="Disruption of Y-to-PDA transdifferentiation." evidence="8">
    <original>HME</original>
    <variation>TMG</variation>
    <location>
        <begin position="811"/>
        <end position="813"/>
    </location>
</feature>
<feature type="mutagenesis site" description="In fp11; loss of demethylase activity and disruption of Y-to-PDA transdifferentiation." evidence="8">
    <original>G</original>
    <variation>E</variation>
    <location>
        <position position="888"/>
    </location>
</feature>
<feature type="mutagenesis site" description="In fp25; loss of demethylase activity and disruption of Y-to-PDA transdifferentiation." evidence="8">
    <original>S</original>
    <variation>F</variation>
    <location>
        <position position="903"/>
    </location>
</feature>
<feature type="mutagenesis site" description="Disruption of Y-to-PDA transdifferentiation; when associated with S-1001; S-1025 and S-1028." evidence="8">
    <original>C</original>
    <variation>S</variation>
    <location>
        <position position="998"/>
    </location>
</feature>
<feature type="mutagenesis site" description="Disruption of Y-to-PDA transdifferentiation; when associated with S-998; S-1025 and S-1028." evidence="8">
    <original>C</original>
    <variation>S</variation>
    <location>
        <position position="1001"/>
    </location>
</feature>
<feature type="mutagenesis site" description="Disruption of Y-to-PDA transdifferentiation; when associated with S-998; S-1001 and S-1028." evidence="8">
    <original>C</original>
    <variation>S</variation>
    <location>
        <position position="1025"/>
    </location>
</feature>
<feature type="mutagenesis site" description="Disruption of Y-to-PDA transdifferentiation; when associated with S-998; S-1001 and S-1025." evidence="8">
    <original>C</original>
    <variation>S</variation>
    <location>
        <position position="1028"/>
    </location>
</feature>
<reference evidence="12" key="1">
    <citation type="journal article" date="1998" name="Science">
        <title>Genome sequence of the nematode C. elegans: a platform for investigating biology.</title>
        <authorList>
            <consortium name="The C. elegans sequencing consortium"/>
        </authorList>
    </citation>
    <scope>NUCLEOTIDE SEQUENCE [LARGE SCALE GENOMIC DNA]</scope>
    <source>
        <strain evidence="12">Bristol N2</strain>
    </source>
</reference>
<reference evidence="11" key="2">
    <citation type="journal article" date="2007" name="Nature">
        <title>UTX and JMJD3 are histone H3K27 demethylases involved in HOX gene regulation and development.</title>
        <authorList>
            <person name="Agger K."/>
            <person name="Cloos P.A."/>
            <person name="Christensen J."/>
            <person name="Pasini D."/>
            <person name="Rose S."/>
            <person name="Rappsilber J."/>
            <person name="Issaeva I."/>
            <person name="Canaani E."/>
            <person name="Salcini A.E."/>
            <person name="Helin K."/>
        </authorList>
    </citation>
    <scope>FUNCTION</scope>
    <scope>DISRUPTION PHENOTYPE</scope>
</reference>
<reference evidence="11" key="3">
    <citation type="journal article" date="2011" name="Cell Metab.">
        <title>Histone demethylase UTX-1 regulates C. elegans life span by targeting the insulin/IGF-1 signaling pathway.</title>
        <authorList>
            <person name="Jin C."/>
            <person name="Li J."/>
            <person name="Green C.D."/>
            <person name="Yu X."/>
            <person name="Tang X."/>
            <person name="Han D."/>
            <person name="Xian B."/>
            <person name="Wang D."/>
            <person name="Huang X."/>
            <person name="Cao X."/>
            <person name="Yan Z."/>
            <person name="Hou L."/>
            <person name="Liu J."/>
            <person name="Shukeir N."/>
            <person name="Khaitovich P."/>
            <person name="Chen C.D."/>
            <person name="Zhang H."/>
            <person name="Jenuwein T."/>
            <person name="Han J.D."/>
        </authorList>
    </citation>
    <scope>FUNCTION</scope>
    <scope>DISRUPTION PHENOTYPE</scope>
</reference>
<reference evidence="11" key="4">
    <citation type="journal article" date="2012" name="PLoS Genet.">
        <title>The C. elegans H3K27 demethylase UTX-1 is essential for normal development, independent of its enzymatic activity.</title>
        <authorList>
            <person name="Vandamme J."/>
            <person name="Lettier G."/>
            <person name="Sidoli S."/>
            <person name="Di Schiavi E."/>
            <person name="Noerregaard Jensen O."/>
            <person name="Salcini A.E."/>
        </authorList>
    </citation>
    <scope>TISSUE SPECIFICITY</scope>
</reference>
<reference evidence="11" key="5">
    <citation type="journal article" date="2014" name="Science">
        <title>Sequential histone-modifying activities determine the robustness of transdifferentiation.</title>
        <authorList>
            <person name="Zuryn S."/>
            <person name="Ahier A."/>
            <person name="Portoso M."/>
            <person name="White E.R."/>
            <person name="Morin M.C."/>
            <person name="Margueron R."/>
            <person name="Jarriault S."/>
        </authorList>
    </citation>
    <scope>FUNCTION</scope>
    <scope>INTERACTION WITH UNC-3 AND WDR-5.1</scope>
    <scope>SUBCELLULAR LOCATION</scope>
    <scope>DEVELOPMENTAL STAGE</scope>
    <scope>DISRUPTION PHENOTYPE</scope>
    <scope>MUTAGENESIS OF 811-HIS--GLU-813; GLY-888; SER-903; CYS-998; CYS-1001; CYS-1025 AND CYS-1028</scope>
</reference>
<reference evidence="11" key="6">
    <citation type="journal article" date="2015" name="Mol. Cell">
        <title>Repression of the heat shock response is a programmed event at the onset of reproduction.</title>
        <authorList>
            <person name="Labbadia J."/>
            <person name="Morimoto R.I."/>
        </authorList>
    </citation>
    <scope>FUNCTION</scope>
</reference>
<reference evidence="11" key="7">
    <citation type="journal article" date="2016" name="Cell">
        <title>Two Conserved Histone Demethylases Regulate Mitochondrial Stress-Induced Longevity.</title>
        <authorList>
            <person name="Merkwirth C."/>
            <person name="Jovaisaite V."/>
            <person name="Durieux J."/>
            <person name="Matilainen O."/>
            <person name="Jordan S.D."/>
            <person name="Quiros P.M."/>
            <person name="Steffen K.K."/>
            <person name="Williams E.G."/>
            <person name="Mouchiroud L."/>
            <person name="Tronnes S.U."/>
            <person name="Murillo V."/>
            <person name="Wolff S.C."/>
            <person name="Shaw R.J."/>
            <person name="Auwerx J."/>
            <person name="Dillin A."/>
        </authorList>
    </citation>
    <scope>FUNCTION</scope>
    <scope>DISRUPTION PHENOTYPE</scope>
</reference>
<name>JMJ31_CAEEL</name>
<keyword id="KW-0156">Chromatin regulator</keyword>
<keyword id="KW-0223">Dioxygenase</keyword>
<keyword id="KW-0408">Iron</keyword>
<keyword id="KW-0479">Metal-binding</keyword>
<keyword id="KW-0539">Nucleus</keyword>
<keyword id="KW-0560">Oxidoreductase</keyword>
<keyword id="KW-1185">Reference proteome</keyword>
<keyword id="KW-0862">Zinc</keyword>
<sequence length="1061" mass="120302">MQGKNSHLTGITGTTHFTIFGASPRSMSLVKNSQETPPFPGMNSTMRPVEFNSTKQPEAQTIDQEQDAPKSFDFKNQTLGVYSDTVLNPLKNDSFKDELVVDVQKNLPIESLTVSPKSSTDQNCRSTNEAIRIAGFDNFADQLQESNGVFEACPEAHSEQGNESEDFKDLINSETECNIEDVVLPTVHVSTDSEEIISGDVIMNDSNVVSKPKNLEKVETPDVLIGSGSNDKLSDMTEQIGNNQHLEKLISEKTEKSLSDNETTLKPVPVQHTNSVGSSIGTTSGDSEISDDDQKSWSPKNESLDYQPASTSSEFTETTSVANQTESNAGSVDDYCPRTSIDIGLDSSAPSCSSDATREPTPIKKRGRKKKEQSATEPPIPRTKRAYTKNPNTIRKRRMKKNQSDDEEDDGPPKRRTINYQIEFRDASGAWTMAQQLIFVRDFMSKKNDKIVKLSKSRQDRVDKFILQFQKTQDSHYMRAAIQLNTIFPDQGNYRHCQDYLKDLTIRVVVPPKRREGKRKSEVPANPPALLLTGPLYLNFYCTSQEVLEAAGQLLEFHVNAVYKDERLQPPVADKTLLDLERAMYHEQVKDLTDYHKYRIPCPTLTVTTKEEVFSSDFERILNSASITNISGIAKALNIKTELFSLPEIAKCHPELSIDILNQVPQSADGNCDSKGIRCWDVTSYSSKMKLQDFERYMQKEESEAMQAFETISNCTAKELESTCQKLKAERIAAQNAIEGCDETMPWIKFGTNIDLLSENFKKQMNEIEKLPTFLLPNREGNLLNYAGVDVLGINTVQMYAKPIGSRTPAHMENSLMASINWNRGPGTCVWFAVPYEYWGQLEFMIGEHGHKYQDQDYWPSEKELLELGVPVIKFEQKADEMVYVNTGCFHWVQSNSFCINVSWNVGQPNFTQLATSIVAHDHNMLIGNQAHVPLVNLVWNAARQRLFVDDPEMYKAMRGVMIRSLAHSKWYFDLIDHHDYIVGDASEWKLADRVQRCKYCTSEIFNIVRWYTTEDLSVDSYPFCSHCHVANEYKKDRFLKYTWFFSLETLVNIFDAYVPN</sequence>